<geneLocation type="mitochondrion"/>
<organism>
    <name type="scientific">Equus asinus</name>
    <name type="common">Donkey</name>
    <name type="synonym">Equus africanus asinus</name>
    <dbReference type="NCBI Taxonomy" id="9793"/>
    <lineage>
        <taxon>Eukaryota</taxon>
        <taxon>Metazoa</taxon>
        <taxon>Chordata</taxon>
        <taxon>Craniata</taxon>
        <taxon>Vertebrata</taxon>
        <taxon>Euteleostomi</taxon>
        <taxon>Mammalia</taxon>
        <taxon>Eutheria</taxon>
        <taxon>Laurasiatheria</taxon>
        <taxon>Perissodactyla</taxon>
        <taxon>Equidae</taxon>
        <taxon>Equus</taxon>
    </lineage>
</organism>
<name>CYB_EQUAS</name>
<keyword id="KW-0249">Electron transport</keyword>
<keyword id="KW-0349">Heme</keyword>
<keyword id="KW-0408">Iron</keyword>
<keyword id="KW-0472">Membrane</keyword>
<keyword id="KW-0479">Metal-binding</keyword>
<keyword id="KW-0496">Mitochondrion</keyword>
<keyword id="KW-0999">Mitochondrion inner membrane</keyword>
<keyword id="KW-1185">Reference proteome</keyword>
<keyword id="KW-0679">Respiratory chain</keyword>
<keyword id="KW-0812">Transmembrane</keyword>
<keyword id="KW-1133">Transmembrane helix</keyword>
<keyword id="KW-0813">Transport</keyword>
<keyword id="KW-0830">Ubiquinone</keyword>
<protein>
    <recommendedName>
        <fullName>Cytochrome b</fullName>
    </recommendedName>
    <alternativeName>
        <fullName>Complex III subunit 3</fullName>
    </alternativeName>
    <alternativeName>
        <fullName>Complex III subunit III</fullName>
    </alternativeName>
    <alternativeName>
        <fullName>Cytochrome b-c1 complex subunit 3</fullName>
    </alternativeName>
    <alternativeName>
        <fullName>Ubiquinol-cytochrome-c reductase complex cytochrome b subunit</fullName>
    </alternativeName>
</protein>
<sequence>MTNIRKSHPLIKIINHSFIDLPTPSNISSWWNFGSLLGICLILQILTGLFLAMHYTSDTTTAFSSVTHICRDVNYGWIIRYLHANGASMFFICLFIHVGRGLYYGSYTFLETWNIGIILLFTVMATAFMGYVLPWGQMSFWGATVITNLLSAIPYIGTTLVEWIWGGFSVDKATLTRFFAFHFILPFIITALVIVHLLFLHETGSNNPSGIPSDMDKIPFHPYYTIKDILGLLLLVLLLLTLVLFSPDLLGDPDNYTPANPLSTPPHIKPEWYFLFAYAILRSIPNKLGGVLALILSILILALIPTLHMSKQRSMMFRPLSQCVFWLLVADLLTLTWIGGQPVEHPYVIIGQLASILYFSLILIFMPLASTIENNLLKW</sequence>
<evidence type="ECO:0000250" key="1"/>
<evidence type="ECO:0000250" key="2">
    <source>
        <dbReference type="UniProtKB" id="P00157"/>
    </source>
</evidence>
<evidence type="ECO:0000255" key="3">
    <source>
        <dbReference type="PROSITE-ProRule" id="PRU00967"/>
    </source>
</evidence>
<evidence type="ECO:0000255" key="4">
    <source>
        <dbReference type="PROSITE-ProRule" id="PRU00968"/>
    </source>
</evidence>
<comment type="function">
    <text evidence="2">Component of the ubiquinol-cytochrome c reductase complex (complex III or cytochrome b-c1 complex) that is part of the mitochondrial respiratory chain. The b-c1 complex mediates electron transfer from ubiquinol to cytochrome c. Contributes to the generation of a proton gradient across the mitochondrial membrane that is then used for ATP synthesis.</text>
</comment>
<comment type="cofactor">
    <cofactor evidence="2">
        <name>heme b</name>
        <dbReference type="ChEBI" id="CHEBI:60344"/>
    </cofactor>
    <text evidence="2">Binds 2 heme b groups non-covalently.</text>
</comment>
<comment type="subunit">
    <text evidence="2">The cytochrome bc1 complex contains 11 subunits: 3 respiratory subunits (MT-CYB, CYC1 and UQCRFS1), 2 core proteins (UQCRC1 and UQCRC2) and 6 low-molecular weight proteins (UQCRH/QCR6, UQCRB/QCR7, UQCRQ/QCR8, UQCR10/QCR9, UQCR11/QCR10 and a cleavage product of UQCRFS1). This cytochrome bc1 complex then forms a dimer.</text>
</comment>
<comment type="subcellular location">
    <subcellularLocation>
        <location evidence="2">Mitochondrion inner membrane</location>
        <topology evidence="2">Multi-pass membrane protein</topology>
    </subcellularLocation>
</comment>
<comment type="miscellaneous">
    <text evidence="1">Heme 1 (or BL or b562) is low-potential and absorbs at about 562 nm, and heme 2 (or BH or b566) is high-potential and absorbs at about 566 nm.</text>
</comment>
<comment type="similarity">
    <text evidence="3 4">Belongs to the cytochrome b family.</text>
</comment>
<comment type="caution">
    <text evidence="2">The full-length protein contains only eight transmembrane helices, not nine as predicted by bioinformatics tools.</text>
</comment>
<proteinExistence type="inferred from homology"/>
<dbReference type="EMBL" id="X97337">
    <property type="protein sequence ID" value="CAA66026.1"/>
    <property type="molecule type" value="Genomic_DNA"/>
</dbReference>
<dbReference type="PIR" id="T11375">
    <property type="entry name" value="T11375"/>
</dbReference>
<dbReference type="RefSeq" id="NP_007393.1">
    <property type="nucleotide sequence ID" value="NC_001788.1"/>
</dbReference>
<dbReference type="SMR" id="P92487"/>
<dbReference type="GeneID" id="808065"/>
<dbReference type="KEGG" id="eai:808065"/>
<dbReference type="CTD" id="4519"/>
<dbReference type="Proteomes" id="UP000694387">
    <property type="component" value="Mitochondrion MT"/>
</dbReference>
<dbReference type="GO" id="GO:0005743">
    <property type="term" value="C:mitochondrial inner membrane"/>
    <property type="evidence" value="ECO:0007669"/>
    <property type="project" value="UniProtKB-SubCell"/>
</dbReference>
<dbReference type="GO" id="GO:0045275">
    <property type="term" value="C:respiratory chain complex III"/>
    <property type="evidence" value="ECO:0007669"/>
    <property type="project" value="InterPro"/>
</dbReference>
<dbReference type="GO" id="GO:0046872">
    <property type="term" value="F:metal ion binding"/>
    <property type="evidence" value="ECO:0007669"/>
    <property type="project" value="UniProtKB-KW"/>
</dbReference>
<dbReference type="GO" id="GO:0008121">
    <property type="term" value="F:ubiquinol-cytochrome-c reductase activity"/>
    <property type="evidence" value="ECO:0007669"/>
    <property type="project" value="InterPro"/>
</dbReference>
<dbReference type="GO" id="GO:0006122">
    <property type="term" value="P:mitochondrial electron transport, ubiquinol to cytochrome c"/>
    <property type="evidence" value="ECO:0007669"/>
    <property type="project" value="TreeGrafter"/>
</dbReference>
<dbReference type="CDD" id="cd00290">
    <property type="entry name" value="cytochrome_b_C"/>
    <property type="match status" value="1"/>
</dbReference>
<dbReference type="CDD" id="cd00284">
    <property type="entry name" value="Cytochrome_b_N"/>
    <property type="match status" value="1"/>
</dbReference>
<dbReference type="FunFam" id="1.20.810.10:FF:000002">
    <property type="entry name" value="Cytochrome b"/>
    <property type="match status" value="1"/>
</dbReference>
<dbReference type="Gene3D" id="1.20.810.10">
    <property type="entry name" value="Cytochrome Bc1 Complex, Chain C"/>
    <property type="match status" value="1"/>
</dbReference>
<dbReference type="InterPro" id="IPR005798">
    <property type="entry name" value="Cyt_b/b6_C"/>
</dbReference>
<dbReference type="InterPro" id="IPR036150">
    <property type="entry name" value="Cyt_b/b6_C_sf"/>
</dbReference>
<dbReference type="InterPro" id="IPR005797">
    <property type="entry name" value="Cyt_b/b6_N"/>
</dbReference>
<dbReference type="InterPro" id="IPR027387">
    <property type="entry name" value="Cytb/b6-like_sf"/>
</dbReference>
<dbReference type="InterPro" id="IPR030689">
    <property type="entry name" value="Cytochrome_b"/>
</dbReference>
<dbReference type="InterPro" id="IPR048260">
    <property type="entry name" value="Cytochrome_b_C_euk/bac"/>
</dbReference>
<dbReference type="InterPro" id="IPR048259">
    <property type="entry name" value="Cytochrome_b_N_euk/bac"/>
</dbReference>
<dbReference type="InterPro" id="IPR016174">
    <property type="entry name" value="Di-haem_cyt_TM"/>
</dbReference>
<dbReference type="PANTHER" id="PTHR19271">
    <property type="entry name" value="CYTOCHROME B"/>
    <property type="match status" value="1"/>
</dbReference>
<dbReference type="PANTHER" id="PTHR19271:SF16">
    <property type="entry name" value="CYTOCHROME B"/>
    <property type="match status" value="1"/>
</dbReference>
<dbReference type="Pfam" id="PF00032">
    <property type="entry name" value="Cytochrom_B_C"/>
    <property type="match status" value="1"/>
</dbReference>
<dbReference type="Pfam" id="PF00033">
    <property type="entry name" value="Cytochrome_B"/>
    <property type="match status" value="1"/>
</dbReference>
<dbReference type="PIRSF" id="PIRSF038885">
    <property type="entry name" value="COB"/>
    <property type="match status" value="1"/>
</dbReference>
<dbReference type="SUPFAM" id="SSF81648">
    <property type="entry name" value="a domain/subunit of cytochrome bc1 complex (Ubiquinol-cytochrome c reductase)"/>
    <property type="match status" value="1"/>
</dbReference>
<dbReference type="SUPFAM" id="SSF81342">
    <property type="entry name" value="Transmembrane di-heme cytochromes"/>
    <property type="match status" value="1"/>
</dbReference>
<dbReference type="PROSITE" id="PS51003">
    <property type="entry name" value="CYTB_CTER"/>
    <property type="match status" value="1"/>
</dbReference>
<dbReference type="PROSITE" id="PS51002">
    <property type="entry name" value="CYTB_NTER"/>
    <property type="match status" value="1"/>
</dbReference>
<reference key="1">
    <citation type="journal article" date="1996" name="J. Mol. Evol.">
        <title>The complete mitochondrial DNA (mtDNA) of the donkey and mtDNA comparisons among four closely related mammalian species-pairs.</title>
        <authorList>
            <person name="Xu X."/>
            <person name="Gullberg A."/>
            <person name="Arnason U."/>
        </authorList>
    </citation>
    <scope>NUCLEOTIDE SEQUENCE [GENOMIC DNA]</scope>
    <source>
        <tissue>Kidney</tissue>
    </source>
</reference>
<gene>
    <name type="primary">MT-CYB</name>
    <name type="synonym">COB</name>
    <name type="synonym">CYTB</name>
    <name type="synonym">MTCYB</name>
</gene>
<feature type="chain" id="PRO_0000060933" description="Cytochrome b">
    <location>
        <begin position="1"/>
        <end position="379"/>
    </location>
</feature>
<feature type="transmembrane region" description="Helical" evidence="2">
    <location>
        <begin position="33"/>
        <end position="53"/>
    </location>
</feature>
<feature type="transmembrane region" description="Helical" evidence="2">
    <location>
        <begin position="77"/>
        <end position="98"/>
    </location>
</feature>
<feature type="transmembrane region" description="Helical" evidence="2">
    <location>
        <begin position="113"/>
        <end position="133"/>
    </location>
</feature>
<feature type="transmembrane region" description="Helical" evidence="2">
    <location>
        <begin position="178"/>
        <end position="198"/>
    </location>
</feature>
<feature type="transmembrane region" description="Helical" evidence="2">
    <location>
        <begin position="226"/>
        <end position="246"/>
    </location>
</feature>
<feature type="transmembrane region" description="Helical" evidence="2">
    <location>
        <begin position="288"/>
        <end position="308"/>
    </location>
</feature>
<feature type="transmembrane region" description="Helical" evidence="2">
    <location>
        <begin position="320"/>
        <end position="340"/>
    </location>
</feature>
<feature type="transmembrane region" description="Helical" evidence="2">
    <location>
        <begin position="347"/>
        <end position="367"/>
    </location>
</feature>
<feature type="binding site" description="axial binding residue" evidence="2">
    <location>
        <position position="83"/>
    </location>
    <ligand>
        <name>heme b</name>
        <dbReference type="ChEBI" id="CHEBI:60344"/>
        <label>b562</label>
    </ligand>
    <ligandPart>
        <name>Fe</name>
        <dbReference type="ChEBI" id="CHEBI:18248"/>
    </ligandPart>
</feature>
<feature type="binding site" description="axial binding residue" evidence="2">
    <location>
        <position position="97"/>
    </location>
    <ligand>
        <name>heme b</name>
        <dbReference type="ChEBI" id="CHEBI:60344"/>
        <label>b566</label>
    </ligand>
    <ligandPart>
        <name>Fe</name>
        <dbReference type="ChEBI" id="CHEBI:18248"/>
    </ligandPart>
</feature>
<feature type="binding site" description="axial binding residue" evidence="2">
    <location>
        <position position="182"/>
    </location>
    <ligand>
        <name>heme b</name>
        <dbReference type="ChEBI" id="CHEBI:60344"/>
        <label>b562</label>
    </ligand>
    <ligandPart>
        <name>Fe</name>
        <dbReference type="ChEBI" id="CHEBI:18248"/>
    </ligandPart>
</feature>
<feature type="binding site" description="axial binding residue" evidence="2">
    <location>
        <position position="196"/>
    </location>
    <ligand>
        <name>heme b</name>
        <dbReference type="ChEBI" id="CHEBI:60344"/>
        <label>b566</label>
    </ligand>
    <ligandPart>
        <name>Fe</name>
        <dbReference type="ChEBI" id="CHEBI:18248"/>
    </ligandPart>
</feature>
<feature type="binding site" evidence="2">
    <location>
        <position position="201"/>
    </location>
    <ligand>
        <name>a ubiquinone</name>
        <dbReference type="ChEBI" id="CHEBI:16389"/>
    </ligand>
</feature>
<accession>P92487</accession>